<accession>Q91664</accession>
<accession>Q91665</accession>
<protein>
    <recommendedName>
        <fullName>V-set and immunoglobulin domain-containing protein 1</fullName>
    </recommendedName>
    <alternativeName>
        <fullName>Cortical thymocyte marker CTX</fullName>
    </alternativeName>
</protein>
<feature type="signal peptide" evidence="1">
    <location>
        <begin position="1"/>
        <end position="19"/>
    </location>
</feature>
<feature type="chain" id="PRO_0000313576" description="V-set and immunoglobulin domain-containing protein 1">
    <location>
        <begin position="20"/>
        <end position="318"/>
    </location>
</feature>
<feature type="topological domain" description="Extracellular" evidence="1">
    <location>
        <begin position="20"/>
        <end position="233"/>
    </location>
</feature>
<feature type="transmembrane region" description="Helical" evidence="1">
    <location>
        <begin position="234"/>
        <end position="254"/>
    </location>
</feature>
<feature type="topological domain" description="Cytoplasmic" evidence="1">
    <location>
        <begin position="255"/>
        <end position="318"/>
    </location>
</feature>
<feature type="domain" description="Ig-like V-type">
    <location>
        <begin position="20"/>
        <end position="131"/>
    </location>
</feature>
<feature type="domain" description="Ig-like C2-type">
    <location>
        <begin position="136"/>
        <end position="223"/>
    </location>
</feature>
<feature type="region of interest" description="Disordered" evidence="3">
    <location>
        <begin position="261"/>
        <end position="318"/>
    </location>
</feature>
<feature type="disulfide bond" evidence="2">
    <location>
        <begin position="41"/>
        <end position="114"/>
    </location>
</feature>
<feature type="disulfide bond" evidence="2">
    <location>
        <begin position="157"/>
        <end position="207"/>
    </location>
</feature>
<feature type="sequence conflict" description="In Ref. 1; AAC59860." evidence="5" ref="1">
    <location>
        <begin position="226"/>
        <end position="227"/>
    </location>
</feature>
<feature type="sequence conflict" description="In Ref. 1; AAC59860." evidence="5" ref="1">
    <original>GGLLA</original>
    <variation>ERTVG</variation>
    <location>
        <begin position="237"/>
        <end position="241"/>
    </location>
</feature>
<reference key="1">
    <citation type="journal article" date="1996" name="Eur. J. Immunol.">
        <title>CTX, a novel molecule specifically expressed on the surface of cortical thymocytes in Xenopus.</title>
        <authorList>
            <person name="Chretien I."/>
            <person name="Robert J."/>
            <person name="Marcuz A."/>
            <person name="Garcia-Sanz J.A."/>
            <person name="Courtet M."/>
            <person name="Du Pasquier L."/>
        </authorList>
    </citation>
    <scope>NUCLEOTIDE SEQUENCE [GENOMIC DNA / MRNA]</scope>
    <scope>TISSUE SPECIFICITY</scope>
    <source>
        <tissue>Thymus</tissue>
    </source>
</reference>
<keyword id="KW-1015">Disulfide bond</keyword>
<keyword id="KW-0393">Immunoglobulin domain</keyword>
<keyword id="KW-0472">Membrane</keyword>
<keyword id="KW-1185">Reference proteome</keyword>
<keyword id="KW-0677">Repeat</keyword>
<keyword id="KW-0732">Signal</keyword>
<keyword id="KW-0812">Transmembrane</keyword>
<keyword id="KW-1133">Transmembrane helix</keyword>
<name>VSIG1_XENLA</name>
<organism>
    <name type="scientific">Xenopus laevis</name>
    <name type="common">African clawed frog</name>
    <dbReference type="NCBI Taxonomy" id="8355"/>
    <lineage>
        <taxon>Eukaryota</taxon>
        <taxon>Metazoa</taxon>
        <taxon>Chordata</taxon>
        <taxon>Craniata</taxon>
        <taxon>Vertebrata</taxon>
        <taxon>Euteleostomi</taxon>
        <taxon>Amphibia</taxon>
        <taxon>Batrachia</taxon>
        <taxon>Anura</taxon>
        <taxon>Pipoidea</taxon>
        <taxon>Pipidae</taxon>
        <taxon>Xenopodinae</taxon>
        <taxon>Xenopus</taxon>
        <taxon>Xenopus</taxon>
    </lineage>
</organism>
<gene>
    <name type="primary">vsig1</name>
    <name type="synonym">ctx</name>
</gene>
<proteinExistence type="evidence at transcript level"/>
<evidence type="ECO:0000255" key="1"/>
<evidence type="ECO:0000255" key="2">
    <source>
        <dbReference type="PROSITE-ProRule" id="PRU00114"/>
    </source>
</evidence>
<evidence type="ECO:0000256" key="3">
    <source>
        <dbReference type="SAM" id="MobiDB-lite"/>
    </source>
</evidence>
<evidence type="ECO:0000269" key="4">
    <source>
    </source>
</evidence>
<evidence type="ECO:0000305" key="5"/>
<comment type="subcellular location">
    <subcellularLocation>
        <location evidence="5">Membrane</location>
        <topology evidence="5">Single-pass type I membrane protein</topology>
    </subcellularLocation>
</comment>
<comment type="tissue specificity">
    <text evidence="4">Expressed in thymocytes.</text>
</comment>
<comment type="sequence caution" evidence="5">
    <conflict type="frameshift">
        <sequence resource="EMBL-CDS" id="AAC59860"/>
    </conflict>
</comment>
<dbReference type="EMBL" id="U43330">
    <property type="protein sequence ID" value="AAC59899.1"/>
    <property type="molecule type" value="mRNA"/>
</dbReference>
<dbReference type="EMBL" id="U43393">
    <property type="protein sequence ID" value="AAC59860.1"/>
    <property type="status" value="ALT_FRAME"/>
    <property type="molecule type" value="Genomic_DNA"/>
</dbReference>
<dbReference type="RefSeq" id="NP_001079275.1">
    <property type="nucleotide sequence ID" value="NM_001085806.1"/>
</dbReference>
<dbReference type="SMR" id="Q91664"/>
<dbReference type="GeneID" id="378558"/>
<dbReference type="KEGG" id="xla:378558"/>
<dbReference type="AGR" id="Xenbase:XB-GENE-865058"/>
<dbReference type="CTD" id="378558"/>
<dbReference type="Xenbase" id="XB-GENE-865058">
    <property type="gene designation" value="vsig1.L"/>
</dbReference>
<dbReference type="OrthoDB" id="190835at2759"/>
<dbReference type="Proteomes" id="UP000186698">
    <property type="component" value="Chromosome 8L"/>
</dbReference>
<dbReference type="Bgee" id="378558">
    <property type="expression patterns" value="Expressed in stomach and 9 other cell types or tissues"/>
</dbReference>
<dbReference type="GO" id="GO:0016323">
    <property type="term" value="C:basolateral plasma membrane"/>
    <property type="evidence" value="ECO:0000318"/>
    <property type="project" value="GO_Central"/>
</dbReference>
<dbReference type="GO" id="GO:0003382">
    <property type="term" value="P:epithelial cell morphogenesis"/>
    <property type="evidence" value="ECO:0007669"/>
    <property type="project" value="InterPro"/>
</dbReference>
<dbReference type="GO" id="GO:0030277">
    <property type="term" value="P:maintenance of gastrointestinal epithelium"/>
    <property type="evidence" value="ECO:0000318"/>
    <property type="project" value="GO_Central"/>
</dbReference>
<dbReference type="FunFam" id="2.60.40.10:FF:000095">
    <property type="entry name" value="immunoglobulin superfamily member 11 isoform X1"/>
    <property type="match status" value="1"/>
</dbReference>
<dbReference type="Gene3D" id="2.60.40.10">
    <property type="entry name" value="Immunoglobulins"/>
    <property type="match status" value="2"/>
</dbReference>
<dbReference type="InterPro" id="IPR007110">
    <property type="entry name" value="Ig-like_dom"/>
</dbReference>
<dbReference type="InterPro" id="IPR036179">
    <property type="entry name" value="Ig-like_dom_sf"/>
</dbReference>
<dbReference type="InterPro" id="IPR013783">
    <property type="entry name" value="Ig-like_fold"/>
</dbReference>
<dbReference type="InterPro" id="IPR003599">
    <property type="entry name" value="Ig_sub"/>
</dbReference>
<dbReference type="InterPro" id="IPR003598">
    <property type="entry name" value="Ig_sub2"/>
</dbReference>
<dbReference type="InterPro" id="IPR013106">
    <property type="entry name" value="Ig_V-set"/>
</dbReference>
<dbReference type="InterPro" id="IPR029861">
    <property type="entry name" value="VSIG1"/>
</dbReference>
<dbReference type="PANTHER" id="PTHR44974">
    <property type="entry name" value="V-SET AND IMMUNOGLOBULIN DOMAIN-CONTAINING PROTEIN 1"/>
    <property type="match status" value="1"/>
</dbReference>
<dbReference type="PANTHER" id="PTHR44974:SF1">
    <property type="entry name" value="V-SET AND IMMUNOGLOBULIN DOMAIN-CONTAINING PROTEIN 1"/>
    <property type="match status" value="1"/>
</dbReference>
<dbReference type="Pfam" id="PF13927">
    <property type="entry name" value="Ig_3"/>
    <property type="match status" value="1"/>
</dbReference>
<dbReference type="Pfam" id="PF07686">
    <property type="entry name" value="V-set"/>
    <property type="match status" value="1"/>
</dbReference>
<dbReference type="SMART" id="SM00409">
    <property type="entry name" value="IG"/>
    <property type="match status" value="2"/>
</dbReference>
<dbReference type="SMART" id="SM00408">
    <property type="entry name" value="IGc2"/>
    <property type="match status" value="2"/>
</dbReference>
<dbReference type="SMART" id="SM00406">
    <property type="entry name" value="IGv"/>
    <property type="match status" value="1"/>
</dbReference>
<dbReference type="SUPFAM" id="SSF48726">
    <property type="entry name" value="Immunoglobulin"/>
    <property type="match status" value="2"/>
</dbReference>
<dbReference type="PROSITE" id="PS50835">
    <property type="entry name" value="IG_LIKE"/>
    <property type="match status" value="2"/>
</dbReference>
<sequence>MSFLLFITLGLSLTALSHCVQVTIQNPIINVTSGQNATLYCTYILNNQNKNNLVIQWNIFQAKSQNQETVFFYQNGQSLSGPSYKNRVTAAMSPGNATITISNMQSQDTGIYTCEVLNLPESSGQGKILLTVLVPPSVPHCSIRGAVETGHFISLLCYSEEGMPRPIYSWNRVENGLLKSTPSQMNQQKGSLIIGNLTDFEEGYYRCTASNNLGNATCELNLHTGGEGGVIAAAVIGGLLAAAIIIAIVWFLVVKRKQKKQLPPTKEMKTGGNQYMAVSGEANEPPKENLGASEPTETIQFHDHAENAANGETEEPTA</sequence>